<gene>
    <name evidence="1" type="primary">garR</name>
    <name type="ordered locus">c3880</name>
</gene>
<dbReference type="EC" id="1.1.1.60" evidence="1"/>
<dbReference type="EMBL" id="AE014075">
    <property type="protein sequence ID" value="AAN82321.1"/>
    <property type="status" value="ALT_INIT"/>
    <property type="molecule type" value="Genomic_DNA"/>
</dbReference>
<dbReference type="SMR" id="P0ABQ3"/>
<dbReference type="STRING" id="199310.c3880"/>
<dbReference type="KEGG" id="ecc:c3880"/>
<dbReference type="eggNOG" id="COG2084">
    <property type="taxonomic scope" value="Bacteria"/>
</dbReference>
<dbReference type="HOGENOM" id="CLU_035117_1_0_6"/>
<dbReference type="UniPathway" id="UPA00565">
    <property type="reaction ID" value="UER00631"/>
</dbReference>
<dbReference type="Proteomes" id="UP000001410">
    <property type="component" value="Chromosome"/>
</dbReference>
<dbReference type="GO" id="GO:0008679">
    <property type="term" value="F:2-hydroxy-3-oxopropionate reductase activity"/>
    <property type="evidence" value="ECO:0007669"/>
    <property type="project" value="UniProtKB-UniRule"/>
</dbReference>
<dbReference type="GO" id="GO:0051287">
    <property type="term" value="F:NAD binding"/>
    <property type="evidence" value="ECO:0007669"/>
    <property type="project" value="InterPro"/>
</dbReference>
<dbReference type="GO" id="GO:0050661">
    <property type="term" value="F:NADP binding"/>
    <property type="evidence" value="ECO:0007669"/>
    <property type="project" value="InterPro"/>
</dbReference>
<dbReference type="GO" id="GO:0046392">
    <property type="term" value="P:galactarate catabolic process"/>
    <property type="evidence" value="ECO:0007669"/>
    <property type="project" value="UniProtKB-UniRule"/>
</dbReference>
<dbReference type="GO" id="GO:0046487">
    <property type="term" value="P:glyoxylate metabolic process"/>
    <property type="evidence" value="ECO:0007669"/>
    <property type="project" value="InterPro"/>
</dbReference>
<dbReference type="FunFam" id="1.10.1040.10:FF:000008">
    <property type="entry name" value="2-hydroxy-3-oxopropionate reductase"/>
    <property type="match status" value="1"/>
</dbReference>
<dbReference type="FunFam" id="3.40.50.720:FF:000071">
    <property type="entry name" value="2-hydroxy-3-oxopropionate reductase"/>
    <property type="match status" value="1"/>
</dbReference>
<dbReference type="Gene3D" id="1.10.1040.10">
    <property type="entry name" value="N-(1-d-carboxylethyl)-l-norvaline Dehydrogenase, domain 2"/>
    <property type="match status" value="1"/>
</dbReference>
<dbReference type="Gene3D" id="3.40.50.720">
    <property type="entry name" value="NAD(P)-binding Rossmann-like Domain"/>
    <property type="match status" value="1"/>
</dbReference>
<dbReference type="HAMAP" id="MF_02032">
    <property type="entry name" value="Tartronate_sem_reduc"/>
    <property type="match status" value="1"/>
</dbReference>
<dbReference type="InterPro" id="IPR002204">
    <property type="entry name" value="3-OH-isobutyrate_DH-rel_CS"/>
</dbReference>
<dbReference type="InterPro" id="IPR008927">
    <property type="entry name" value="6-PGluconate_DH-like_C_sf"/>
</dbReference>
<dbReference type="InterPro" id="IPR013328">
    <property type="entry name" value="6PGD_dom2"/>
</dbReference>
<dbReference type="InterPro" id="IPR006115">
    <property type="entry name" value="6PGDH_NADP-bd"/>
</dbReference>
<dbReference type="InterPro" id="IPR029154">
    <property type="entry name" value="HIBADH-like_NADP-bd"/>
</dbReference>
<dbReference type="InterPro" id="IPR015815">
    <property type="entry name" value="HIBADH-related"/>
</dbReference>
<dbReference type="InterPro" id="IPR036291">
    <property type="entry name" value="NAD(P)-bd_dom_sf"/>
</dbReference>
<dbReference type="InterPro" id="IPR006398">
    <property type="entry name" value="Tartro_sem_red"/>
</dbReference>
<dbReference type="NCBIfam" id="NF008592">
    <property type="entry name" value="PRK11559.1"/>
    <property type="match status" value="1"/>
</dbReference>
<dbReference type="NCBIfam" id="TIGR01505">
    <property type="entry name" value="tartro_sem_red"/>
    <property type="match status" value="1"/>
</dbReference>
<dbReference type="PANTHER" id="PTHR43060:SF3">
    <property type="entry name" value="2-HYDROXY-3-OXOPROPIONATE REDUCTASE"/>
    <property type="match status" value="1"/>
</dbReference>
<dbReference type="PANTHER" id="PTHR43060">
    <property type="entry name" value="3-HYDROXYISOBUTYRATE DEHYDROGENASE-LIKE 1, MITOCHONDRIAL-RELATED"/>
    <property type="match status" value="1"/>
</dbReference>
<dbReference type="Pfam" id="PF14833">
    <property type="entry name" value="NAD_binding_11"/>
    <property type="match status" value="1"/>
</dbReference>
<dbReference type="Pfam" id="PF03446">
    <property type="entry name" value="NAD_binding_2"/>
    <property type="match status" value="1"/>
</dbReference>
<dbReference type="PIRSF" id="PIRSF000103">
    <property type="entry name" value="HIBADH"/>
    <property type="match status" value="1"/>
</dbReference>
<dbReference type="SUPFAM" id="SSF48179">
    <property type="entry name" value="6-phosphogluconate dehydrogenase C-terminal domain-like"/>
    <property type="match status" value="1"/>
</dbReference>
<dbReference type="SUPFAM" id="SSF51735">
    <property type="entry name" value="NAD(P)-binding Rossmann-fold domains"/>
    <property type="match status" value="1"/>
</dbReference>
<dbReference type="PROSITE" id="PS00895">
    <property type="entry name" value="3_HYDROXYISOBUT_DH"/>
    <property type="match status" value="1"/>
</dbReference>
<feature type="chain" id="PRO_0000173060" description="2-hydroxy-3-oxopropionate reductase">
    <location>
        <begin position="1"/>
        <end position="294"/>
    </location>
</feature>
<feature type="active site" evidence="1">
    <location>
        <position position="170"/>
    </location>
</feature>
<feature type="binding site" evidence="1">
    <location>
        <begin position="4"/>
        <end position="18"/>
    </location>
    <ligand>
        <name>NAD(+)</name>
        <dbReference type="ChEBI" id="CHEBI:57540"/>
    </ligand>
</feature>
<feature type="binding site" evidence="1">
    <location>
        <position position="95"/>
    </location>
    <ligand>
        <name>NAD(+)</name>
        <dbReference type="ChEBI" id="CHEBI:57540"/>
    </ligand>
</feature>
<feature type="binding site" evidence="1">
    <location>
        <position position="238"/>
    </location>
    <ligand>
        <name>NAD(+)</name>
        <dbReference type="ChEBI" id="CHEBI:57540"/>
    </ligand>
</feature>
<sequence>MKVGFIGLGIMGKPMSKNLLKAGYSLVVADRNPEAIADVIAAGAETASTAKAIAEQCDVIITMLPNSPHVKEVALGENGIIEGAKPGTVLIDMSSIAPLASREISEALKAKGIDMLDAPVSGGEPKAIDGTLSVMVGGDKAIFDKYYDLMKAMAGSVVHTGEIGAGNVTKLANQVIVALNIAAMSEALTLATKAGVNPDLVYQAIRGGLAGSTVLDAKAPMVMDRNFKPGFRIDLHIKDLANALDTSHGVGAQLPLTAAVMEMMQALRADGLGTADHSALACYYEKLAKVEVTR</sequence>
<evidence type="ECO:0000255" key="1">
    <source>
        <dbReference type="HAMAP-Rule" id="MF_02032"/>
    </source>
</evidence>
<evidence type="ECO:0000305" key="2"/>
<protein>
    <recommendedName>
        <fullName evidence="1">2-hydroxy-3-oxopropionate reductase</fullName>
        <ecNumber evidence="1">1.1.1.60</ecNumber>
    </recommendedName>
    <alternativeName>
        <fullName evidence="1">Tartronate semialdehyde reductase</fullName>
        <shortName evidence="1">TSAR</shortName>
    </alternativeName>
</protein>
<proteinExistence type="inferred from homology"/>
<organism>
    <name type="scientific">Escherichia coli O6:H1 (strain CFT073 / ATCC 700928 / UPEC)</name>
    <dbReference type="NCBI Taxonomy" id="199310"/>
    <lineage>
        <taxon>Bacteria</taxon>
        <taxon>Pseudomonadati</taxon>
        <taxon>Pseudomonadota</taxon>
        <taxon>Gammaproteobacteria</taxon>
        <taxon>Enterobacterales</taxon>
        <taxon>Enterobacteriaceae</taxon>
        <taxon>Escherichia</taxon>
    </lineage>
</organism>
<accession>P0ABQ3</accession>
<accession>P23523</accession>
<name>GARR_ECOL6</name>
<keyword id="KW-0520">NAD</keyword>
<keyword id="KW-0560">Oxidoreductase</keyword>
<keyword id="KW-1185">Reference proteome</keyword>
<reference key="1">
    <citation type="journal article" date="2002" name="Proc. Natl. Acad. Sci. U.S.A.">
        <title>Extensive mosaic structure revealed by the complete genome sequence of uropathogenic Escherichia coli.</title>
        <authorList>
            <person name="Welch R.A."/>
            <person name="Burland V."/>
            <person name="Plunkett G. III"/>
            <person name="Redford P."/>
            <person name="Roesch P."/>
            <person name="Rasko D."/>
            <person name="Buckles E.L."/>
            <person name="Liou S.-R."/>
            <person name="Boutin A."/>
            <person name="Hackett J."/>
            <person name="Stroud D."/>
            <person name="Mayhew G.F."/>
            <person name="Rose D.J."/>
            <person name="Zhou S."/>
            <person name="Schwartz D.C."/>
            <person name="Perna N.T."/>
            <person name="Mobley H.L.T."/>
            <person name="Donnenberg M.S."/>
            <person name="Blattner F.R."/>
        </authorList>
    </citation>
    <scope>NUCLEOTIDE SEQUENCE [LARGE SCALE GENOMIC DNA]</scope>
    <source>
        <strain>CFT073 / ATCC 700928 / UPEC</strain>
    </source>
</reference>
<comment type="function">
    <text evidence="1">Catalyzes the reduction of tatronate semialdehyde to D-glycerate.</text>
</comment>
<comment type="catalytic activity">
    <reaction evidence="1">
        <text>(R)-glycerate + NADP(+) = 2-hydroxy-3-oxopropanoate + NADPH + H(+)</text>
        <dbReference type="Rhea" id="RHEA:18841"/>
        <dbReference type="ChEBI" id="CHEBI:15378"/>
        <dbReference type="ChEBI" id="CHEBI:16659"/>
        <dbReference type="ChEBI" id="CHEBI:57783"/>
        <dbReference type="ChEBI" id="CHEBI:57978"/>
        <dbReference type="ChEBI" id="CHEBI:58349"/>
        <dbReference type="EC" id="1.1.1.60"/>
    </reaction>
</comment>
<comment type="catalytic activity">
    <reaction evidence="1">
        <text>(R)-glycerate + NAD(+) = 2-hydroxy-3-oxopropanoate + NADH + H(+)</text>
        <dbReference type="Rhea" id="RHEA:18845"/>
        <dbReference type="ChEBI" id="CHEBI:15378"/>
        <dbReference type="ChEBI" id="CHEBI:16659"/>
        <dbReference type="ChEBI" id="CHEBI:57540"/>
        <dbReference type="ChEBI" id="CHEBI:57945"/>
        <dbReference type="ChEBI" id="CHEBI:57978"/>
        <dbReference type="EC" id="1.1.1.60"/>
    </reaction>
</comment>
<comment type="pathway">
    <text evidence="1">Carbohydrate acid metabolism; galactarate degradation; D-glycerate from galactarate: step 3/3.</text>
</comment>
<comment type="similarity">
    <text evidence="1">Belongs to the HIBADH-related family. 2-hydroxy-3-oxopropionate reductase subfamily.</text>
</comment>
<comment type="sequence caution" evidence="2">
    <conflict type="erroneous initiation">
        <sequence resource="EMBL-CDS" id="AAN82321"/>
    </conflict>
</comment>